<comment type="function">
    <text evidence="1">Catalyzes the 2-thiolation of uridine at the wobble position (U34) of tRNA, leading to the formation of s(2)U34.</text>
</comment>
<comment type="catalytic activity">
    <reaction evidence="1">
        <text>S-sulfanyl-L-cysteinyl-[protein] + uridine(34) in tRNA + AH2 + ATP = 2-thiouridine(34) in tRNA + L-cysteinyl-[protein] + A + AMP + diphosphate + H(+)</text>
        <dbReference type="Rhea" id="RHEA:47032"/>
        <dbReference type="Rhea" id="RHEA-COMP:10131"/>
        <dbReference type="Rhea" id="RHEA-COMP:11726"/>
        <dbReference type="Rhea" id="RHEA-COMP:11727"/>
        <dbReference type="Rhea" id="RHEA-COMP:11728"/>
        <dbReference type="ChEBI" id="CHEBI:13193"/>
        <dbReference type="ChEBI" id="CHEBI:15378"/>
        <dbReference type="ChEBI" id="CHEBI:17499"/>
        <dbReference type="ChEBI" id="CHEBI:29950"/>
        <dbReference type="ChEBI" id="CHEBI:30616"/>
        <dbReference type="ChEBI" id="CHEBI:33019"/>
        <dbReference type="ChEBI" id="CHEBI:61963"/>
        <dbReference type="ChEBI" id="CHEBI:65315"/>
        <dbReference type="ChEBI" id="CHEBI:87170"/>
        <dbReference type="ChEBI" id="CHEBI:456215"/>
        <dbReference type="EC" id="2.8.1.13"/>
    </reaction>
</comment>
<comment type="subcellular location">
    <subcellularLocation>
        <location evidence="1">Cytoplasm</location>
    </subcellularLocation>
</comment>
<comment type="similarity">
    <text evidence="1">Belongs to the MnmA/TRMU family.</text>
</comment>
<protein>
    <recommendedName>
        <fullName evidence="1">tRNA-specific 2-thiouridylase MnmA</fullName>
        <ecNumber evidence="1">2.8.1.13</ecNumber>
    </recommendedName>
</protein>
<name>MNMA_STRZP</name>
<feature type="chain" id="PRO_1000198632" description="tRNA-specific 2-thiouridylase MnmA">
    <location>
        <begin position="1"/>
        <end position="373"/>
    </location>
</feature>
<feature type="region of interest" description="Interaction with target base in tRNA" evidence="1">
    <location>
        <begin position="98"/>
        <end position="100"/>
    </location>
</feature>
<feature type="region of interest" description="Interaction with tRNA" evidence="1">
    <location>
        <begin position="150"/>
        <end position="152"/>
    </location>
</feature>
<feature type="region of interest" description="Interaction with tRNA" evidence="1">
    <location>
        <begin position="312"/>
        <end position="313"/>
    </location>
</feature>
<feature type="active site" description="Nucleophile" evidence="1">
    <location>
        <position position="103"/>
    </location>
</feature>
<feature type="active site" description="Cysteine persulfide intermediate" evidence="1">
    <location>
        <position position="200"/>
    </location>
</feature>
<feature type="binding site" evidence="1">
    <location>
        <begin position="12"/>
        <end position="19"/>
    </location>
    <ligand>
        <name>ATP</name>
        <dbReference type="ChEBI" id="CHEBI:30616"/>
    </ligand>
</feature>
<feature type="binding site" evidence="1">
    <location>
        <position position="38"/>
    </location>
    <ligand>
        <name>ATP</name>
        <dbReference type="ChEBI" id="CHEBI:30616"/>
    </ligand>
</feature>
<feature type="binding site" evidence="1">
    <location>
        <position position="127"/>
    </location>
    <ligand>
        <name>ATP</name>
        <dbReference type="ChEBI" id="CHEBI:30616"/>
    </ligand>
</feature>
<feature type="site" description="Interaction with tRNA" evidence="1">
    <location>
        <position position="128"/>
    </location>
</feature>
<feature type="site" description="Interaction with tRNA" evidence="1">
    <location>
        <position position="344"/>
    </location>
</feature>
<feature type="disulfide bond" description="Alternate" evidence="1">
    <location>
        <begin position="103"/>
        <end position="200"/>
    </location>
</feature>
<accession>C1CI29</accession>
<evidence type="ECO:0000255" key="1">
    <source>
        <dbReference type="HAMAP-Rule" id="MF_00144"/>
    </source>
</evidence>
<organism>
    <name type="scientific">Streptococcus pneumoniae (strain P1031)</name>
    <dbReference type="NCBI Taxonomy" id="488223"/>
    <lineage>
        <taxon>Bacteria</taxon>
        <taxon>Bacillati</taxon>
        <taxon>Bacillota</taxon>
        <taxon>Bacilli</taxon>
        <taxon>Lactobacillales</taxon>
        <taxon>Streptococcaceae</taxon>
        <taxon>Streptococcus</taxon>
    </lineage>
</organism>
<dbReference type="EC" id="2.8.1.13" evidence="1"/>
<dbReference type="EMBL" id="CP000920">
    <property type="protein sequence ID" value="ACO21766.1"/>
    <property type="molecule type" value="Genomic_DNA"/>
</dbReference>
<dbReference type="RefSeq" id="WP_001282978.1">
    <property type="nucleotide sequence ID" value="NC_012467.1"/>
</dbReference>
<dbReference type="SMR" id="C1CI29"/>
<dbReference type="GeneID" id="45652377"/>
<dbReference type="KEGG" id="spp:SPP_0186"/>
<dbReference type="HOGENOM" id="CLU_035188_1_0_9"/>
<dbReference type="GO" id="GO:0005737">
    <property type="term" value="C:cytoplasm"/>
    <property type="evidence" value="ECO:0007669"/>
    <property type="project" value="UniProtKB-SubCell"/>
</dbReference>
<dbReference type="GO" id="GO:0005524">
    <property type="term" value="F:ATP binding"/>
    <property type="evidence" value="ECO:0007669"/>
    <property type="project" value="UniProtKB-KW"/>
</dbReference>
<dbReference type="GO" id="GO:0000049">
    <property type="term" value="F:tRNA binding"/>
    <property type="evidence" value="ECO:0007669"/>
    <property type="project" value="UniProtKB-KW"/>
</dbReference>
<dbReference type="GO" id="GO:0103016">
    <property type="term" value="F:tRNA-uridine 2-sulfurtransferase activity"/>
    <property type="evidence" value="ECO:0007669"/>
    <property type="project" value="UniProtKB-EC"/>
</dbReference>
<dbReference type="GO" id="GO:0002143">
    <property type="term" value="P:tRNA wobble position uridine thiolation"/>
    <property type="evidence" value="ECO:0007669"/>
    <property type="project" value="TreeGrafter"/>
</dbReference>
<dbReference type="CDD" id="cd01998">
    <property type="entry name" value="MnmA_TRMU-like"/>
    <property type="match status" value="1"/>
</dbReference>
<dbReference type="FunFam" id="2.30.30.280:FF:000001">
    <property type="entry name" value="tRNA-specific 2-thiouridylase MnmA"/>
    <property type="match status" value="1"/>
</dbReference>
<dbReference type="FunFam" id="2.40.30.10:FF:000023">
    <property type="entry name" value="tRNA-specific 2-thiouridylase MnmA"/>
    <property type="match status" value="1"/>
</dbReference>
<dbReference type="FunFam" id="3.40.50.620:FF:000004">
    <property type="entry name" value="tRNA-specific 2-thiouridylase MnmA"/>
    <property type="match status" value="1"/>
</dbReference>
<dbReference type="Gene3D" id="2.30.30.280">
    <property type="entry name" value="Adenine nucleotide alpha hydrolases-like domains"/>
    <property type="match status" value="1"/>
</dbReference>
<dbReference type="Gene3D" id="3.40.50.620">
    <property type="entry name" value="HUPs"/>
    <property type="match status" value="1"/>
</dbReference>
<dbReference type="Gene3D" id="2.40.30.10">
    <property type="entry name" value="Translation factors"/>
    <property type="match status" value="1"/>
</dbReference>
<dbReference type="HAMAP" id="MF_00144">
    <property type="entry name" value="tRNA_thiouridyl_MnmA"/>
    <property type="match status" value="1"/>
</dbReference>
<dbReference type="InterPro" id="IPR004506">
    <property type="entry name" value="MnmA-like"/>
</dbReference>
<dbReference type="InterPro" id="IPR046885">
    <property type="entry name" value="MnmA-like_C"/>
</dbReference>
<dbReference type="InterPro" id="IPR046884">
    <property type="entry name" value="MnmA-like_central"/>
</dbReference>
<dbReference type="InterPro" id="IPR023382">
    <property type="entry name" value="MnmA-like_central_sf"/>
</dbReference>
<dbReference type="InterPro" id="IPR014729">
    <property type="entry name" value="Rossmann-like_a/b/a_fold"/>
</dbReference>
<dbReference type="NCBIfam" id="NF001138">
    <property type="entry name" value="PRK00143.1"/>
    <property type="match status" value="1"/>
</dbReference>
<dbReference type="NCBIfam" id="TIGR00420">
    <property type="entry name" value="trmU"/>
    <property type="match status" value="1"/>
</dbReference>
<dbReference type="PANTHER" id="PTHR11933:SF5">
    <property type="entry name" value="MITOCHONDRIAL TRNA-SPECIFIC 2-THIOURIDYLASE 1"/>
    <property type="match status" value="1"/>
</dbReference>
<dbReference type="PANTHER" id="PTHR11933">
    <property type="entry name" value="TRNA 5-METHYLAMINOMETHYL-2-THIOURIDYLATE -METHYLTRANSFERASE"/>
    <property type="match status" value="1"/>
</dbReference>
<dbReference type="Pfam" id="PF03054">
    <property type="entry name" value="tRNA_Me_trans"/>
    <property type="match status" value="1"/>
</dbReference>
<dbReference type="Pfam" id="PF20258">
    <property type="entry name" value="tRNA_Me_trans_C"/>
    <property type="match status" value="1"/>
</dbReference>
<dbReference type="Pfam" id="PF20259">
    <property type="entry name" value="tRNA_Me_trans_M"/>
    <property type="match status" value="1"/>
</dbReference>
<dbReference type="SUPFAM" id="SSF52402">
    <property type="entry name" value="Adenine nucleotide alpha hydrolases-like"/>
    <property type="match status" value="1"/>
</dbReference>
<keyword id="KW-0067">ATP-binding</keyword>
<keyword id="KW-0963">Cytoplasm</keyword>
<keyword id="KW-1015">Disulfide bond</keyword>
<keyword id="KW-0547">Nucleotide-binding</keyword>
<keyword id="KW-0694">RNA-binding</keyword>
<keyword id="KW-0808">Transferase</keyword>
<keyword id="KW-0819">tRNA processing</keyword>
<keyword id="KW-0820">tRNA-binding</keyword>
<proteinExistence type="inferred from homology"/>
<sequence length="373" mass="41628">MSDNSKTRVVVGMSGGVDSSVTALLLKEQGYDVIGIFMKNWDDTDENGVCTATEDYKDVVAVADQIGIPYYSVNFEKEYWDRVFEYFLAEYRAGRTPNPDVMCNKEIKFKAFLDYAMTLGADYVATGHYARVARDEDGTVHMLRGVDNGKDQTYFLSQLSQEQLQKTMFPLGHLEKPEVRKLAEEAGLSTAKKKDSTGICFIGEKNFKNFLSNYLPAQPGRMMTVDGRDMGEHAGLMYYTIGQRGGLGIGGQHGGDNAPWFVVGKDLSKNILYVGQGFYHDSLMSTSLEASQVHFTREMPEEFTLECTAKFRYRQPDSKVTVHVKGDKAEVIFAEPQRAITPGQAVVFYDGEECLGGGLIDNAYRDGQVCQYI</sequence>
<gene>
    <name evidence="1" type="primary">mnmA</name>
    <name type="ordered locus">SPP_0186</name>
</gene>
<reference key="1">
    <citation type="journal article" date="2010" name="Genome Biol.">
        <title>Structure and dynamics of the pan-genome of Streptococcus pneumoniae and closely related species.</title>
        <authorList>
            <person name="Donati C."/>
            <person name="Hiller N.L."/>
            <person name="Tettelin H."/>
            <person name="Muzzi A."/>
            <person name="Croucher N.J."/>
            <person name="Angiuoli S.V."/>
            <person name="Oggioni M."/>
            <person name="Dunning Hotopp J.C."/>
            <person name="Hu F.Z."/>
            <person name="Riley D.R."/>
            <person name="Covacci A."/>
            <person name="Mitchell T.J."/>
            <person name="Bentley S.D."/>
            <person name="Kilian M."/>
            <person name="Ehrlich G.D."/>
            <person name="Rappuoli R."/>
            <person name="Moxon E.R."/>
            <person name="Masignani V."/>
        </authorList>
    </citation>
    <scope>NUCLEOTIDE SEQUENCE [LARGE SCALE GENOMIC DNA]</scope>
    <source>
        <strain>P1031</strain>
    </source>
</reference>